<reference key="1">
    <citation type="journal article" date="2005" name="Proc. Natl. Acad. Sci. U.S.A.">
        <title>Comparison of the complete genome sequences of Pseudomonas syringae pv. syringae B728a and pv. tomato DC3000.</title>
        <authorList>
            <person name="Feil H."/>
            <person name="Feil W.S."/>
            <person name="Chain P."/>
            <person name="Larimer F."/>
            <person name="Dibartolo G."/>
            <person name="Copeland A."/>
            <person name="Lykidis A."/>
            <person name="Trong S."/>
            <person name="Nolan M."/>
            <person name="Goltsman E."/>
            <person name="Thiel J."/>
            <person name="Malfatti S."/>
            <person name="Loper J.E."/>
            <person name="Lapidus A."/>
            <person name="Detter J.C."/>
            <person name="Land M."/>
            <person name="Richardson P.M."/>
            <person name="Kyrpides N.C."/>
            <person name="Ivanova N."/>
            <person name="Lindow S.E."/>
        </authorList>
    </citation>
    <scope>NUCLEOTIDE SEQUENCE [LARGE SCALE GENOMIC DNA]</scope>
    <source>
        <strain>B728a</strain>
    </source>
</reference>
<name>FABA_PSEU2</name>
<protein>
    <recommendedName>
        <fullName evidence="1">3-hydroxydecanoyl-[acyl-carrier-protein] dehydratase</fullName>
        <ecNumber evidence="1">4.2.1.59</ecNumber>
    </recommendedName>
    <alternativeName>
        <fullName evidence="1">3-hydroxyacyl-[acyl-carrier-protein] dehydratase FabA</fullName>
    </alternativeName>
    <alternativeName>
        <fullName evidence="1">Beta-hydroxydecanoyl thioester dehydrase</fullName>
    </alternativeName>
    <alternativeName>
        <fullName evidence="1">Trans-2-decenoyl-[acyl-carrier-protein] isomerase</fullName>
        <ecNumber evidence="1">5.3.3.14</ecNumber>
    </alternativeName>
</protein>
<evidence type="ECO:0000255" key="1">
    <source>
        <dbReference type="HAMAP-Rule" id="MF_00405"/>
    </source>
</evidence>
<comment type="function">
    <text evidence="1">Necessary for the introduction of cis unsaturation into fatty acids. Catalyzes the dehydration of (3R)-3-hydroxydecanoyl-ACP to E-(2)-decenoyl-ACP and then its isomerization to Z-(3)-decenoyl-ACP. Can catalyze the dehydratase reaction for beta-hydroxyacyl-ACPs with saturated chain lengths up to 16:0, being most active on intermediate chain length.</text>
</comment>
<comment type="catalytic activity">
    <reaction evidence="1">
        <text>a (3R)-hydroxyacyl-[ACP] = a (2E)-enoyl-[ACP] + H2O</text>
        <dbReference type="Rhea" id="RHEA:13097"/>
        <dbReference type="Rhea" id="RHEA-COMP:9925"/>
        <dbReference type="Rhea" id="RHEA-COMP:9945"/>
        <dbReference type="ChEBI" id="CHEBI:15377"/>
        <dbReference type="ChEBI" id="CHEBI:78784"/>
        <dbReference type="ChEBI" id="CHEBI:78827"/>
        <dbReference type="EC" id="4.2.1.59"/>
    </reaction>
</comment>
<comment type="catalytic activity">
    <reaction evidence="1">
        <text>(3R)-hydroxydecanoyl-[ACP] = (2E)-decenoyl-[ACP] + H2O</text>
        <dbReference type="Rhea" id="RHEA:41860"/>
        <dbReference type="Rhea" id="RHEA-COMP:9638"/>
        <dbReference type="Rhea" id="RHEA-COMP:9639"/>
        <dbReference type="ChEBI" id="CHEBI:15377"/>
        <dbReference type="ChEBI" id="CHEBI:78466"/>
        <dbReference type="ChEBI" id="CHEBI:78467"/>
    </reaction>
</comment>
<comment type="catalytic activity">
    <reaction evidence="1">
        <text>(2E)-decenoyl-[ACP] = (3Z)-decenoyl-[ACP]</text>
        <dbReference type="Rhea" id="RHEA:23568"/>
        <dbReference type="Rhea" id="RHEA-COMP:9639"/>
        <dbReference type="Rhea" id="RHEA-COMP:9927"/>
        <dbReference type="ChEBI" id="CHEBI:78467"/>
        <dbReference type="ChEBI" id="CHEBI:78798"/>
        <dbReference type="EC" id="5.3.3.14"/>
    </reaction>
</comment>
<comment type="pathway">
    <text evidence="1">Lipid metabolism; fatty acid biosynthesis.</text>
</comment>
<comment type="subunit">
    <text evidence="1">Homodimer.</text>
</comment>
<comment type="subcellular location">
    <subcellularLocation>
        <location evidence="1">Cytoplasm</location>
    </subcellularLocation>
</comment>
<comment type="similarity">
    <text evidence="1">Belongs to the thioester dehydratase family. FabA subfamily.</text>
</comment>
<proteinExistence type="inferred from homology"/>
<organism>
    <name type="scientific">Pseudomonas syringae pv. syringae (strain B728a)</name>
    <dbReference type="NCBI Taxonomy" id="205918"/>
    <lineage>
        <taxon>Bacteria</taxon>
        <taxon>Pseudomonadati</taxon>
        <taxon>Pseudomonadota</taxon>
        <taxon>Gammaproteobacteria</taxon>
        <taxon>Pseudomonadales</taxon>
        <taxon>Pseudomonadaceae</taxon>
        <taxon>Pseudomonas</taxon>
        <taxon>Pseudomonas syringae</taxon>
    </lineage>
</organism>
<feature type="chain" id="PRO_0000267744" description="3-hydroxydecanoyl-[acyl-carrier-protein] dehydratase">
    <location>
        <begin position="1"/>
        <end position="171"/>
    </location>
</feature>
<feature type="active site" evidence="1">
    <location>
        <position position="70"/>
    </location>
</feature>
<accession>Q4ZUV9</accession>
<gene>
    <name evidence="1" type="primary">fabA</name>
    <name type="ordered locus">Psyr_2020</name>
</gene>
<sequence>MTKQHAFTREDLLRCSRGELFGPGNAQLPAPNMLMVDRITHISDEGGKFGKGELVAELDINPDLWFFACHFEGDPVMPGCLGLDAMWQLVGFYLGWQGNPGRGRALGSGEVKFFGQVLPTAKKVTYNIHIKRVLKGKLNLAIADGSVSVDGREIYTAEGLRVGVFTSTENF</sequence>
<dbReference type="EC" id="4.2.1.59" evidence="1"/>
<dbReference type="EC" id="5.3.3.14" evidence="1"/>
<dbReference type="EMBL" id="CP000075">
    <property type="protein sequence ID" value="AAY37063.1"/>
    <property type="molecule type" value="Genomic_DNA"/>
</dbReference>
<dbReference type="RefSeq" id="WP_003316569.1">
    <property type="nucleotide sequence ID" value="NC_007005.1"/>
</dbReference>
<dbReference type="RefSeq" id="YP_235101.1">
    <property type="nucleotide sequence ID" value="NC_007005.1"/>
</dbReference>
<dbReference type="SMR" id="Q4ZUV9"/>
<dbReference type="STRING" id="205918.Psyr_2020"/>
<dbReference type="GeneID" id="77277884"/>
<dbReference type="KEGG" id="psb:Psyr_2020"/>
<dbReference type="PATRIC" id="fig|205918.7.peg.2063"/>
<dbReference type="eggNOG" id="COG0764">
    <property type="taxonomic scope" value="Bacteria"/>
</dbReference>
<dbReference type="HOGENOM" id="CLU_097925_0_0_6"/>
<dbReference type="OrthoDB" id="9786735at2"/>
<dbReference type="UniPathway" id="UPA00094"/>
<dbReference type="Proteomes" id="UP000000426">
    <property type="component" value="Chromosome"/>
</dbReference>
<dbReference type="GO" id="GO:0005737">
    <property type="term" value="C:cytoplasm"/>
    <property type="evidence" value="ECO:0007669"/>
    <property type="project" value="UniProtKB-SubCell"/>
</dbReference>
<dbReference type="GO" id="GO:0019171">
    <property type="term" value="F:(3R)-hydroxyacyl-[acyl-carrier-protein] dehydratase activity"/>
    <property type="evidence" value="ECO:0007669"/>
    <property type="project" value="UniProtKB-UniRule"/>
</dbReference>
<dbReference type="GO" id="GO:0034017">
    <property type="term" value="F:trans-2-decenoyl-acyl-carrier-protein isomerase activity"/>
    <property type="evidence" value="ECO:0007669"/>
    <property type="project" value="UniProtKB-UniRule"/>
</dbReference>
<dbReference type="GO" id="GO:0006636">
    <property type="term" value="P:unsaturated fatty acid biosynthetic process"/>
    <property type="evidence" value="ECO:0007669"/>
    <property type="project" value="UniProtKB-UniRule"/>
</dbReference>
<dbReference type="CDD" id="cd01287">
    <property type="entry name" value="FabA"/>
    <property type="match status" value="1"/>
</dbReference>
<dbReference type="FunFam" id="3.10.129.10:FF:000003">
    <property type="entry name" value="3-hydroxydecanoyl-[acyl-carrier-protein] dehydratase"/>
    <property type="match status" value="1"/>
</dbReference>
<dbReference type="Gene3D" id="3.10.129.10">
    <property type="entry name" value="Hotdog Thioesterase"/>
    <property type="match status" value="1"/>
</dbReference>
<dbReference type="HAMAP" id="MF_00405">
    <property type="entry name" value="FabA"/>
    <property type="match status" value="1"/>
</dbReference>
<dbReference type="InterPro" id="IPR010083">
    <property type="entry name" value="FabA"/>
</dbReference>
<dbReference type="InterPro" id="IPR013114">
    <property type="entry name" value="FabA_FabZ"/>
</dbReference>
<dbReference type="InterPro" id="IPR029069">
    <property type="entry name" value="HotDog_dom_sf"/>
</dbReference>
<dbReference type="NCBIfam" id="TIGR01749">
    <property type="entry name" value="fabA"/>
    <property type="match status" value="1"/>
</dbReference>
<dbReference type="NCBIfam" id="NF003509">
    <property type="entry name" value="PRK05174.1"/>
    <property type="match status" value="1"/>
</dbReference>
<dbReference type="PANTHER" id="PTHR30272">
    <property type="entry name" value="3-HYDROXYACYL-[ACYL-CARRIER-PROTEIN] DEHYDRATASE"/>
    <property type="match status" value="1"/>
</dbReference>
<dbReference type="PANTHER" id="PTHR30272:SF8">
    <property type="entry name" value="3-HYDROXYDECANOYL-[ACYL-CARRIER-PROTEIN] DEHYDRATASE"/>
    <property type="match status" value="1"/>
</dbReference>
<dbReference type="Pfam" id="PF07977">
    <property type="entry name" value="FabA"/>
    <property type="match status" value="1"/>
</dbReference>
<dbReference type="SUPFAM" id="SSF54637">
    <property type="entry name" value="Thioesterase/thiol ester dehydrase-isomerase"/>
    <property type="match status" value="1"/>
</dbReference>
<keyword id="KW-0963">Cytoplasm</keyword>
<keyword id="KW-0275">Fatty acid biosynthesis</keyword>
<keyword id="KW-0276">Fatty acid metabolism</keyword>
<keyword id="KW-0413">Isomerase</keyword>
<keyword id="KW-0444">Lipid biosynthesis</keyword>
<keyword id="KW-0443">Lipid metabolism</keyword>
<keyword id="KW-0456">Lyase</keyword>